<organism>
    <name type="scientific">Bertholletia excelsa</name>
    <name type="common">Brazil nut</name>
    <dbReference type="NCBI Taxonomy" id="3645"/>
    <lineage>
        <taxon>Eukaryota</taxon>
        <taxon>Viridiplantae</taxon>
        <taxon>Streptophyta</taxon>
        <taxon>Embryophyta</taxon>
        <taxon>Tracheophyta</taxon>
        <taxon>Spermatophyta</taxon>
        <taxon>Magnoliopsida</taxon>
        <taxon>eudicotyledons</taxon>
        <taxon>Gunneridae</taxon>
        <taxon>Pentapetalae</taxon>
        <taxon>asterids</taxon>
        <taxon>Ericales</taxon>
        <taxon>Lecythidaceae</taxon>
        <taxon>Bertholletia</taxon>
    </lineage>
</organism>
<comment type="function">
    <text evidence="1">May play a role in photosystem I and II biogenesis.</text>
</comment>
<comment type="subcellular location">
    <subcellularLocation>
        <location evidence="1">Plastid</location>
        <location evidence="1">Chloroplast thylakoid membrane</location>
        <topology evidence="1">Single-pass membrane protein</topology>
    </subcellularLocation>
</comment>
<comment type="similarity">
    <text evidence="1">Belongs to the PsbN family.</text>
</comment>
<comment type="caution">
    <text evidence="1">Originally thought to be a component of PSII; based on experiments in Synechocystis, N.tabacum and barley, and its absence from PSII in T.elongatus and T.vulcanus, this is probably not true.</text>
</comment>
<evidence type="ECO:0000255" key="1">
    <source>
        <dbReference type="HAMAP-Rule" id="MF_00293"/>
    </source>
</evidence>
<name>PSBN_BEREX</name>
<geneLocation type="chloroplast"/>
<sequence>METATLVAIFISGLLVSFTGYALYTAFGQPSQQLRDPFEEHGD</sequence>
<dbReference type="EMBL" id="AY172717">
    <property type="protein sequence ID" value="AAO45802.1"/>
    <property type="molecule type" value="Genomic_DNA"/>
</dbReference>
<dbReference type="RefSeq" id="YP_009445180.1">
    <property type="nucleotide sequence ID" value="NC_036412.1"/>
</dbReference>
<dbReference type="SMR" id="Q6Y8A2"/>
<dbReference type="GeneID" id="35116205"/>
<dbReference type="GO" id="GO:0009535">
    <property type="term" value="C:chloroplast thylakoid membrane"/>
    <property type="evidence" value="ECO:0007669"/>
    <property type="project" value="UniProtKB-SubCell"/>
</dbReference>
<dbReference type="GO" id="GO:0015979">
    <property type="term" value="P:photosynthesis"/>
    <property type="evidence" value="ECO:0007669"/>
    <property type="project" value="InterPro"/>
</dbReference>
<dbReference type="HAMAP" id="MF_00293">
    <property type="entry name" value="PSII_PsbN"/>
    <property type="match status" value="1"/>
</dbReference>
<dbReference type="InterPro" id="IPR003398">
    <property type="entry name" value="PSII_PsbN"/>
</dbReference>
<dbReference type="PANTHER" id="PTHR35326">
    <property type="entry name" value="PROTEIN PSBN"/>
    <property type="match status" value="1"/>
</dbReference>
<dbReference type="PANTHER" id="PTHR35326:SF3">
    <property type="entry name" value="PROTEIN PSBN"/>
    <property type="match status" value="1"/>
</dbReference>
<dbReference type="Pfam" id="PF02468">
    <property type="entry name" value="PsbN"/>
    <property type="match status" value="1"/>
</dbReference>
<reference key="1">
    <citation type="journal article" date="2003" name="Mol. Biol. Evol.">
        <title>Patterns and relative rates of nucleotide and insertion/deletion evolution at six chloroplast intergenic regions in new world species of the Lecythidaceae.</title>
        <authorList>
            <person name="Hamilton M.B."/>
            <person name="Braverman J.M."/>
            <person name="Soria-Hernanz D.F."/>
        </authorList>
    </citation>
    <scope>NUCLEOTIDE SEQUENCE [GENOMIC DNA]</scope>
</reference>
<feature type="chain" id="PRO_0000207872" description="Protein PsbN">
    <location>
        <begin position="1"/>
        <end position="43"/>
    </location>
</feature>
<feature type="transmembrane region" description="Helical" evidence="1">
    <location>
        <begin position="7"/>
        <end position="27"/>
    </location>
</feature>
<gene>
    <name evidence="1" type="primary">psbN</name>
</gene>
<proteinExistence type="inferred from homology"/>
<accession>Q6Y8A2</accession>
<keyword id="KW-0150">Chloroplast</keyword>
<keyword id="KW-0472">Membrane</keyword>
<keyword id="KW-0934">Plastid</keyword>
<keyword id="KW-0793">Thylakoid</keyword>
<keyword id="KW-0812">Transmembrane</keyword>
<keyword id="KW-1133">Transmembrane helix</keyword>
<protein>
    <recommendedName>
        <fullName evidence="1">Protein PsbN</fullName>
    </recommendedName>
</protein>